<sequence length="213" mass="23403">MRQNVLFEFGTPIVRVLNALDALSNGRGILVVDDENRENEGDMIFAAENMTVKQMALAIRYGSGIVCLCLTEEKCRQLKLPMMVKNNSNHYKTAFTVTIEASKGITTGVSAKDRLTTIKTSIEDYAKPSDLNRPGHVFPLRAHNGGVLSRSGHTEAAVDLTTLAGLKPFGVICEVTNEDGSMARTTEIIKFSKQYDMPVLTISDVIAYRMSNL</sequence>
<accession>Q7VQQ4</accession>
<dbReference type="EC" id="4.1.99.12" evidence="1"/>
<dbReference type="EMBL" id="BX248583">
    <property type="protein sequence ID" value="CAD83590.1"/>
    <property type="molecule type" value="Genomic_DNA"/>
</dbReference>
<dbReference type="SMR" id="Q7VQQ4"/>
<dbReference type="STRING" id="203907.Bfl065"/>
<dbReference type="KEGG" id="bfl:Bfl065"/>
<dbReference type="eggNOG" id="COG0108">
    <property type="taxonomic scope" value="Bacteria"/>
</dbReference>
<dbReference type="HOGENOM" id="CLU_020273_3_0_6"/>
<dbReference type="OrthoDB" id="9793111at2"/>
<dbReference type="UniPathway" id="UPA00275">
    <property type="reaction ID" value="UER00399"/>
</dbReference>
<dbReference type="Proteomes" id="UP000002192">
    <property type="component" value="Chromosome"/>
</dbReference>
<dbReference type="GO" id="GO:0005829">
    <property type="term" value="C:cytosol"/>
    <property type="evidence" value="ECO:0007669"/>
    <property type="project" value="TreeGrafter"/>
</dbReference>
<dbReference type="GO" id="GO:0008686">
    <property type="term" value="F:3,4-dihydroxy-2-butanone-4-phosphate synthase activity"/>
    <property type="evidence" value="ECO:0007669"/>
    <property type="project" value="UniProtKB-UniRule"/>
</dbReference>
<dbReference type="GO" id="GO:0000287">
    <property type="term" value="F:magnesium ion binding"/>
    <property type="evidence" value="ECO:0007669"/>
    <property type="project" value="UniProtKB-UniRule"/>
</dbReference>
<dbReference type="GO" id="GO:0030145">
    <property type="term" value="F:manganese ion binding"/>
    <property type="evidence" value="ECO:0007669"/>
    <property type="project" value="UniProtKB-UniRule"/>
</dbReference>
<dbReference type="GO" id="GO:0009231">
    <property type="term" value="P:riboflavin biosynthetic process"/>
    <property type="evidence" value="ECO:0007669"/>
    <property type="project" value="UniProtKB-UniRule"/>
</dbReference>
<dbReference type="FunFam" id="3.90.870.10:FF:000002">
    <property type="entry name" value="3,4-dihydroxy-2-butanone 4-phosphate synthase"/>
    <property type="match status" value="1"/>
</dbReference>
<dbReference type="Gene3D" id="3.90.870.10">
    <property type="entry name" value="DHBP synthase"/>
    <property type="match status" value="1"/>
</dbReference>
<dbReference type="HAMAP" id="MF_00180">
    <property type="entry name" value="RibB"/>
    <property type="match status" value="1"/>
</dbReference>
<dbReference type="InterPro" id="IPR017945">
    <property type="entry name" value="DHBP_synth_RibB-like_a/b_dom"/>
</dbReference>
<dbReference type="InterPro" id="IPR000422">
    <property type="entry name" value="DHBP_synthase_RibB"/>
</dbReference>
<dbReference type="NCBIfam" id="TIGR00506">
    <property type="entry name" value="ribB"/>
    <property type="match status" value="1"/>
</dbReference>
<dbReference type="PANTHER" id="PTHR21327:SF38">
    <property type="entry name" value="3,4-DIHYDROXY-2-BUTANONE 4-PHOSPHATE SYNTHASE"/>
    <property type="match status" value="1"/>
</dbReference>
<dbReference type="PANTHER" id="PTHR21327">
    <property type="entry name" value="GTP CYCLOHYDROLASE II-RELATED"/>
    <property type="match status" value="1"/>
</dbReference>
<dbReference type="Pfam" id="PF00926">
    <property type="entry name" value="DHBP_synthase"/>
    <property type="match status" value="1"/>
</dbReference>
<dbReference type="SUPFAM" id="SSF55821">
    <property type="entry name" value="YrdC/RibB"/>
    <property type="match status" value="1"/>
</dbReference>
<feature type="chain" id="PRO_0000151794" description="3,4-dihydroxy-2-butanone 4-phosphate synthase">
    <location>
        <begin position="1"/>
        <end position="213"/>
    </location>
</feature>
<feature type="binding site" evidence="1">
    <location>
        <begin position="37"/>
        <end position="38"/>
    </location>
    <ligand>
        <name>D-ribulose 5-phosphate</name>
        <dbReference type="ChEBI" id="CHEBI:58121"/>
    </ligand>
</feature>
<feature type="binding site" evidence="1">
    <location>
        <position position="38"/>
    </location>
    <ligand>
        <name>Mg(2+)</name>
        <dbReference type="ChEBI" id="CHEBI:18420"/>
        <label>1</label>
    </ligand>
</feature>
<feature type="binding site" evidence="1">
    <location>
        <position position="38"/>
    </location>
    <ligand>
        <name>Mg(2+)</name>
        <dbReference type="ChEBI" id="CHEBI:18420"/>
        <label>2</label>
    </ligand>
</feature>
<feature type="binding site" evidence="1">
    <location>
        <position position="42"/>
    </location>
    <ligand>
        <name>D-ribulose 5-phosphate</name>
        <dbReference type="ChEBI" id="CHEBI:58121"/>
    </ligand>
</feature>
<feature type="binding site" evidence="1">
    <location>
        <begin position="150"/>
        <end position="154"/>
    </location>
    <ligand>
        <name>D-ribulose 5-phosphate</name>
        <dbReference type="ChEBI" id="CHEBI:58121"/>
    </ligand>
</feature>
<feature type="binding site" evidence="1">
    <location>
        <position position="153"/>
    </location>
    <ligand>
        <name>Mg(2+)</name>
        <dbReference type="ChEBI" id="CHEBI:18420"/>
        <label>2</label>
    </ligand>
</feature>
<feature type="binding site" evidence="1">
    <location>
        <position position="174"/>
    </location>
    <ligand>
        <name>D-ribulose 5-phosphate</name>
        <dbReference type="ChEBI" id="CHEBI:58121"/>
    </ligand>
</feature>
<feature type="site" description="Essential for catalytic activity" evidence="1">
    <location>
        <position position="136"/>
    </location>
</feature>
<feature type="site" description="Essential for catalytic activity" evidence="1">
    <location>
        <position position="174"/>
    </location>
</feature>
<proteinExistence type="inferred from homology"/>
<keyword id="KW-0456">Lyase</keyword>
<keyword id="KW-0460">Magnesium</keyword>
<keyword id="KW-0464">Manganese</keyword>
<keyword id="KW-0479">Metal-binding</keyword>
<keyword id="KW-1185">Reference proteome</keyword>
<keyword id="KW-0686">Riboflavin biosynthesis</keyword>
<gene>
    <name evidence="1" type="primary">ribB</name>
    <name type="ordered locus">Bfl065</name>
</gene>
<name>RIBB_BLOFL</name>
<evidence type="ECO:0000255" key="1">
    <source>
        <dbReference type="HAMAP-Rule" id="MF_00180"/>
    </source>
</evidence>
<protein>
    <recommendedName>
        <fullName evidence="1">3,4-dihydroxy-2-butanone 4-phosphate synthase</fullName>
        <shortName evidence="1">DHBP synthase</shortName>
        <ecNumber evidence="1">4.1.99.12</ecNumber>
    </recommendedName>
</protein>
<reference key="1">
    <citation type="journal article" date="2003" name="Proc. Natl. Acad. Sci. U.S.A.">
        <title>The genome sequence of Blochmannia floridanus: comparative analysis of reduced genomes.</title>
        <authorList>
            <person name="Gil R."/>
            <person name="Silva F.J."/>
            <person name="Zientz E."/>
            <person name="Delmotte F."/>
            <person name="Gonzalez-Candelas F."/>
            <person name="Latorre A."/>
            <person name="Rausell C."/>
            <person name="Kamerbeek J."/>
            <person name="Gadau J."/>
            <person name="Hoelldobler B."/>
            <person name="van Ham R.C.H.J."/>
            <person name="Gross R."/>
            <person name="Moya A."/>
        </authorList>
    </citation>
    <scope>NUCLEOTIDE SEQUENCE [LARGE SCALE GENOMIC DNA]</scope>
</reference>
<comment type="function">
    <text evidence="1">Catalyzes the conversion of D-ribulose 5-phosphate to formate and 3,4-dihydroxy-2-butanone 4-phosphate.</text>
</comment>
<comment type="catalytic activity">
    <reaction evidence="1">
        <text>D-ribulose 5-phosphate = (2S)-2-hydroxy-3-oxobutyl phosphate + formate + H(+)</text>
        <dbReference type="Rhea" id="RHEA:18457"/>
        <dbReference type="ChEBI" id="CHEBI:15378"/>
        <dbReference type="ChEBI" id="CHEBI:15740"/>
        <dbReference type="ChEBI" id="CHEBI:58121"/>
        <dbReference type="ChEBI" id="CHEBI:58830"/>
        <dbReference type="EC" id="4.1.99.12"/>
    </reaction>
</comment>
<comment type="cofactor">
    <cofactor evidence="1">
        <name>Mg(2+)</name>
        <dbReference type="ChEBI" id="CHEBI:18420"/>
    </cofactor>
    <cofactor evidence="1">
        <name>Mn(2+)</name>
        <dbReference type="ChEBI" id="CHEBI:29035"/>
    </cofactor>
    <text evidence="1">Binds 2 divalent metal cations per subunit. Magnesium or manganese.</text>
</comment>
<comment type="pathway">
    <text evidence="1">Cofactor biosynthesis; riboflavin biosynthesis; 2-hydroxy-3-oxobutyl phosphate from D-ribulose 5-phosphate: step 1/1.</text>
</comment>
<comment type="subunit">
    <text evidence="1">Homodimer.</text>
</comment>
<comment type="similarity">
    <text evidence="1">Belongs to the DHBP synthase family.</text>
</comment>
<organism>
    <name type="scientific">Blochmanniella floridana</name>
    <dbReference type="NCBI Taxonomy" id="203907"/>
    <lineage>
        <taxon>Bacteria</taxon>
        <taxon>Pseudomonadati</taxon>
        <taxon>Pseudomonadota</taxon>
        <taxon>Gammaproteobacteria</taxon>
        <taxon>Enterobacterales</taxon>
        <taxon>Enterobacteriaceae</taxon>
        <taxon>ant endosymbionts</taxon>
        <taxon>Candidatus Blochmanniella</taxon>
    </lineage>
</organism>